<name>SPX_LACLM</name>
<evidence type="ECO:0000255" key="1">
    <source>
        <dbReference type="HAMAP-Rule" id="MF_01132"/>
    </source>
</evidence>
<evidence type="ECO:0000305" key="2"/>
<reference key="1">
    <citation type="journal article" date="1999" name="Mol. Microbiol.">
        <title>Effects of metabolic flux on stress response pathways in Lactococcus lactis.</title>
        <authorList>
            <person name="Duwat P."/>
            <person name="Ehrlich S.D."/>
            <person name="Gruss A."/>
        </authorList>
    </citation>
    <scope>NUCLEOTIDE SEQUENCE [GENOMIC DNA]</scope>
</reference>
<reference key="2">
    <citation type="journal article" date="1999" name="Mol. Microbiol.">
        <title>ClpP participates in the degradation of misfolded protein in Lactococcus lactis.</title>
        <authorList>
            <person name="Frees D."/>
            <person name="Ingmer H."/>
        </authorList>
    </citation>
    <scope>NUCLEOTIDE SEQUENCE [GENOMIC DNA]</scope>
</reference>
<reference key="3">
    <citation type="journal article" date="2007" name="J. Bacteriol.">
        <title>The complete genome sequence of the lactic acid bacterial paradigm Lactococcus lactis subsp. cremoris MG1363.</title>
        <authorList>
            <person name="Wegmann U."/>
            <person name="O'Connell-Motherway M."/>
            <person name="Zomer A."/>
            <person name="Buist G."/>
            <person name="Shearman C."/>
            <person name="Canchaya C."/>
            <person name="Ventura M."/>
            <person name="Goesmann A."/>
            <person name="Gasson M.J."/>
            <person name="Kuipers O.P."/>
            <person name="van Sinderen D."/>
            <person name="Kok J."/>
        </authorList>
    </citation>
    <scope>NUCLEOTIDE SEQUENCE [LARGE SCALE GENOMIC DNA]</scope>
    <source>
        <strain>MG1363</strain>
    </source>
</reference>
<keyword id="KW-0963">Cytoplasm</keyword>
<keyword id="KW-1015">Disulfide bond</keyword>
<keyword id="KW-0676">Redox-active center</keyword>
<keyword id="KW-0804">Transcription</keyword>
<keyword id="KW-0805">Transcription regulation</keyword>
<proteinExistence type="inferred from homology"/>
<comment type="function">
    <text evidence="1">Global transcriptional regulator that plays a key role in stress response and exerts either positive or negative regulation of genes. Acts by interacting with the C-terminal domain of the alpha subunit of the RNA polymerase (RNAP). This interaction can enhance binding of RNAP to the promoter region of target genes and stimulate their transcription, or block interaction of RNAP with activator.</text>
</comment>
<comment type="subunit">
    <text evidence="1">Interacts with the C-terminal domain of the alpha subunit of the RNAP.</text>
</comment>
<comment type="subcellular location">
    <subcellularLocation>
        <location evidence="1">Cytoplasm</location>
    </subcellularLocation>
</comment>
<comment type="similarity">
    <text evidence="1 2">Belongs to the ArsC family. Spx subfamily.</text>
</comment>
<protein>
    <recommendedName>
        <fullName evidence="1">Global transcriptional regulator Spx</fullName>
    </recommendedName>
</protein>
<dbReference type="EMBL" id="AF058950">
    <property type="protein sequence ID" value="AAG43111.1"/>
    <property type="molecule type" value="Genomic_DNA"/>
</dbReference>
<dbReference type="EMBL" id="AF028804">
    <property type="protein sequence ID" value="AAG37358.1"/>
    <property type="molecule type" value="Genomic_DNA"/>
</dbReference>
<dbReference type="EMBL" id="AM406671">
    <property type="protein sequence ID" value="CAL97242.1"/>
    <property type="molecule type" value="Genomic_DNA"/>
</dbReference>
<dbReference type="RefSeq" id="WP_003129597.1">
    <property type="nucleotide sequence ID" value="NZ_WJVF01000023.1"/>
</dbReference>
<dbReference type="SMR" id="P60376"/>
<dbReference type="STRING" id="416870.llmg_0640"/>
<dbReference type="GeneID" id="89632775"/>
<dbReference type="KEGG" id="llm:llmg_0640"/>
<dbReference type="eggNOG" id="COG1393">
    <property type="taxonomic scope" value="Bacteria"/>
</dbReference>
<dbReference type="HOGENOM" id="CLU_116644_1_1_9"/>
<dbReference type="OrthoDB" id="9794155at2"/>
<dbReference type="PhylomeDB" id="P60376"/>
<dbReference type="Proteomes" id="UP000000364">
    <property type="component" value="Chromosome"/>
</dbReference>
<dbReference type="GO" id="GO:0005737">
    <property type="term" value="C:cytoplasm"/>
    <property type="evidence" value="ECO:0007669"/>
    <property type="project" value="UniProtKB-SubCell"/>
</dbReference>
<dbReference type="GO" id="GO:0045892">
    <property type="term" value="P:negative regulation of DNA-templated transcription"/>
    <property type="evidence" value="ECO:0007669"/>
    <property type="project" value="InterPro"/>
</dbReference>
<dbReference type="CDD" id="cd03032">
    <property type="entry name" value="ArsC_Spx"/>
    <property type="match status" value="1"/>
</dbReference>
<dbReference type="Gene3D" id="3.40.30.10">
    <property type="entry name" value="Glutaredoxin"/>
    <property type="match status" value="1"/>
</dbReference>
<dbReference type="HAMAP" id="MF_01132">
    <property type="entry name" value="Spx"/>
    <property type="match status" value="1"/>
</dbReference>
<dbReference type="InterPro" id="IPR006660">
    <property type="entry name" value="Arsenate_reductase-like"/>
</dbReference>
<dbReference type="InterPro" id="IPR023731">
    <property type="entry name" value="Spx"/>
</dbReference>
<dbReference type="InterPro" id="IPR036249">
    <property type="entry name" value="Thioredoxin-like_sf"/>
</dbReference>
<dbReference type="InterPro" id="IPR006504">
    <property type="entry name" value="Tscrpt_reg_Spx/MgsR"/>
</dbReference>
<dbReference type="NCBIfam" id="TIGR01617">
    <property type="entry name" value="arsC_related"/>
    <property type="match status" value="1"/>
</dbReference>
<dbReference type="NCBIfam" id="NF002459">
    <property type="entry name" value="PRK01655.1"/>
    <property type="match status" value="1"/>
</dbReference>
<dbReference type="NCBIfam" id="NF009885">
    <property type="entry name" value="PRK13344.1"/>
    <property type="match status" value="1"/>
</dbReference>
<dbReference type="PANTHER" id="PTHR30041">
    <property type="entry name" value="ARSENATE REDUCTASE"/>
    <property type="match status" value="1"/>
</dbReference>
<dbReference type="PANTHER" id="PTHR30041:SF7">
    <property type="entry name" value="GLOBAL TRANSCRIPTIONAL REGULATOR SPX"/>
    <property type="match status" value="1"/>
</dbReference>
<dbReference type="Pfam" id="PF03960">
    <property type="entry name" value="ArsC"/>
    <property type="match status" value="1"/>
</dbReference>
<dbReference type="SUPFAM" id="SSF52833">
    <property type="entry name" value="Thioredoxin-like"/>
    <property type="match status" value="1"/>
</dbReference>
<dbReference type="PROSITE" id="PS51353">
    <property type="entry name" value="ARSC"/>
    <property type="match status" value="1"/>
</dbReference>
<organism>
    <name type="scientific">Lactococcus lactis subsp. cremoris (strain MG1363)</name>
    <dbReference type="NCBI Taxonomy" id="416870"/>
    <lineage>
        <taxon>Bacteria</taxon>
        <taxon>Bacillati</taxon>
        <taxon>Bacillota</taxon>
        <taxon>Bacilli</taxon>
        <taxon>Lactobacillales</taxon>
        <taxon>Streptococcaceae</taxon>
        <taxon>Lactococcus</taxon>
        <taxon>Lactococcus cremoris subsp. cremoris</taxon>
    </lineage>
</organism>
<gene>
    <name evidence="1" type="primary">spx</name>
    <name type="synonym">nrpR</name>
    <name type="synonym">spxA</name>
    <name type="ordered locus">llmg_0640</name>
</gene>
<sequence length="132" mass="15030">MITIYTAPSCTSCKKAKTWLSYHHIPFNERNLIADPLSTTEISQILQKCDDGVEGLISSRNRFVKTLGVDFEDISLSQAIKIISENPQIMRRPIIMDEKRLHVGYNEEEIRAFLPRTVRVLENGGARLRSAI</sequence>
<accession>P60376</accession>
<accession>A2RIZ4</accession>
<accession>Q9ETA4</accession>
<feature type="chain" id="PRO_0000162555" description="Global transcriptional regulator Spx">
    <location>
        <begin position="1"/>
        <end position="132"/>
    </location>
</feature>
<feature type="disulfide bond" description="Redox-active" evidence="1">
    <location>
        <begin position="10"/>
        <end position="13"/>
    </location>
</feature>